<dbReference type="EMBL" id="BA000036">
    <property type="protein sequence ID" value="BAB98486.1"/>
    <property type="molecule type" value="Genomic_DNA"/>
</dbReference>
<dbReference type="EMBL" id="BX927151">
    <property type="protein sequence ID" value="CAF19799.1"/>
    <property type="molecule type" value="Genomic_DNA"/>
</dbReference>
<dbReference type="RefSeq" id="NP_600321.1">
    <property type="nucleotide sequence ID" value="NC_003450.3"/>
</dbReference>
<dbReference type="RefSeq" id="WP_011014118.1">
    <property type="nucleotide sequence ID" value="NC_006958.1"/>
</dbReference>
<dbReference type="SMR" id="Q8NRF6"/>
<dbReference type="STRING" id="196627.cg1243"/>
<dbReference type="KEGG" id="cgb:cg1243"/>
<dbReference type="KEGG" id="cgl:Cgl1093"/>
<dbReference type="PATRIC" id="fig|196627.13.peg.1072"/>
<dbReference type="eggNOG" id="COG5640">
    <property type="taxonomic scope" value="Bacteria"/>
</dbReference>
<dbReference type="HOGENOM" id="CLU_091277_0_0_11"/>
<dbReference type="OrthoDB" id="9815928at2"/>
<dbReference type="BioCyc" id="CORYNE:G18NG-10665-MONOMER"/>
<dbReference type="Proteomes" id="UP000000582">
    <property type="component" value="Chromosome"/>
</dbReference>
<dbReference type="Proteomes" id="UP000001009">
    <property type="component" value="Chromosome"/>
</dbReference>
<dbReference type="GO" id="GO:0005576">
    <property type="term" value="C:extracellular region"/>
    <property type="evidence" value="ECO:0000250"/>
    <property type="project" value="UniProtKB"/>
</dbReference>
<dbReference type="GO" id="GO:0004252">
    <property type="term" value="F:serine-type endopeptidase activity"/>
    <property type="evidence" value="ECO:0007669"/>
    <property type="project" value="InterPro"/>
</dbReference>
<dbReference type="GO" id="GO:0006508">
    <property type="term" value="P:proteolysis"/>
    <property type="evidence" value="ECO:0007669"/>
    <property type="project" value="UniProtKB-KW"/>
</dbReference>
<dbReference type="Gene3D" id="2.40.10.10">
    <property type="entry name" value="Trypsin-like serine proteases"/>
    <property type="match status" value="1"/>
</dbReference>
<dbReference type="InterPro" id="IPR050430">
    <property type="entry name" value="Peptidase_S1"/>
</dbReference>
<dbReference type="InterPro" id="IPR009003">
    <property type="entry name" value="Peptidase_S1_PA"/>
</dbReference>
<dbReference type="InterPro" id="IPR043504">
    <property type="entry name" value="Peptidase_S1_PA_chymotrypsin"/>
</dbReference>
<dbReference type="InterPro" id="IPR001314">
    <property type="entry name" value="Peptidase_S1A"/>
</dbReference>
<dbReference type="InterPro" id="IPR001254">
    <property type="entry name" value="Trypsin_dom"/>
</dbReference>
<dbReference type="PANTHER" id="PTHR24276:SF98">
    <property type="entry name" value="FI18310P1-RELATED"/>
    <property type="match status" value="1"/>
</dbReference>
<dbReference type="PANTHER" id="PTHR24276">
    <property type="entry name" value="POLYSERASE-RELATED"/>
    <property type="match status" value="1"/>
</dbReference>
<dbReference type="Pfam" id="PF00089">
    <property type="entry name" value="Trypsin"/>
    <property type="match status" value="1"/>
</dbReference>
<dbReference type="PRINTS" id="PR00722">
    <property type="entry name" value="CHYMOTRYPSIN"/>
</dbReference>
<dbReference type="SMART" id="SM00020">
    <property type="entry name" value="Tryp_SPc"/>
    <property type="match status" value="1"/>
</dbReference>
<dbReference type="SUPFAM" id="SSF50494">
    <property type="entry name" value="Trypsin-like serine proteases"/>
    <property type="match status" value="1"/>
</dbReference>
<dbReference type="PROSITE" id="PS50240">
    <property type="entry name" value="TRYPSIN_DOM"/>
    <property type="match status" value="1"/>
</dbReference>
<gene>
    <name type="ordered locus">Cgl1093</name>
    <name type="ordered locus">cg1243</name>
</gene>
<name>Y1093_CORGL</name>
<protein>
    <recommendedName>
        <fullName>Putative peptidase Cgl1093</fullName>
    </recommendedName>
</protein>
<sequence length="278" mass="28238">MSSASFTTKALSVLAALTAASAPLVAASPAHALANARNVTGSSTTSDSIVRLHIGNTACTGTMITPTWAITARHCIPEGGIAGAAIGSSTLSQFQQVSQAILHPTADLALVELPNQASSNTVDLYGAHVQPGENGQAAGWGGYSAFGQNVAQQADVQIQRRVVNVPSPDRTAVLLEGTVSNGRLVPGDSGGPLYINGQLAGVLSMSTDVENDALDGTVGWYIPVAEHAEWIAYYTGKHIAPIAGAPAELVDATANPTFIPAPQPFTGSSIGGWALGSS</sequence>
<comment type="subcellular location">
    <subcellularLocation>
        <location evidence="1">Secreted</location>
    </subcellularLocation>
</comment>
<comment type="similarity">
    <text evidence="5">Belongs to the peptidase S1 family.</text>
</comment>
<proteinExistence type="inferred from homology"/>
<keyword id="KW-1015">Disulfide bond</keyword>
<keyword id="KW-0378">Hydrolase</keyword>
<keyword id="KW-0645">Protease</keyword>
<keyword id="KW-1185">Reference proteome</keyword>
<keyword id="KW-0964">Secreted</keyword>
<keyword id="KW-0720">Serine protease</keyword>
<keyword id="KW-0732">Signal</keyword>
<organism>
    <name type="scientific">Corynebacterium glutamicum (strain ATCC 13032 / DSM 20300 / JCM 1318 / BCRC 11384 / CCUG 27702 / LMG 3730 / NBRC 12168 / NCIMB 10025 / NRRL B-2784 / 534)</name>
    <dbReference type="NCBI Taxonomy" id="196627"/>
    <lineage>
        <taxon>Bacteria</taxon>
        <taxon>Bacillati</taxon>
        <taxon>Actinomycetota</taxon>
        <taxon>Actinomycetes</taxon>
        <taxon>Mycobacteriales</taxon>
        <taxon>Corynebacteriaceae</taxon>
        <taxon>Corynebacterium</taxon>
    </lineage>
</organism>
<feature type="signal peptide" evidence="4">
    <location>
        <begin position="1"/>
        <end position="32"/>
    </location>
</feature>
<feature type="chain" id="PRO_0000392965" description="Putative peptidase Cgl1093">
    <location>
        <begin position="33"/>
        <end position="278"/>
    </location>
</feature>
<feature type="domain" description="Peptidase S1" evidence="2 5">
    <location>
        <begin position="33"/>
        <end position="236"/>
    </location>
</feature>
<feature type="active site" description="Charge relay system" evidence="2 5">
    <location>
        <position position="74"/>
    </location>
</feature>
<feature type="active site" description="Charge relay system" evidence="2 5">
    <location>
        <position position="123"/>
    </location>
</feature>
<feature type="active site" description="Charge relay system" evidence="2 5">
    <location>
        <position position="189"/>
    </location>
</feature>
<feature type="disulfide bond" evidence="3 5">
    <location>
        <begin position="59"/>
        <end position="75"/>
    </location>
</feature>
<reference key="1">
    <citation type="journal article" date="2003" name="Appl. Microbiol. Biotechnol.">
        <title>The Corynebacterium glutamicum genome: features and impacts on biotechnological processes.</title>
        <authorList>
            <person name="Ikeda M."/>
            <person name="Nakagawa S."/>
        </authorList>
    </citation>
    <scope>NUCLEOTIDE SEQUENCE [LARGE SCALE GENOMIC DNA]</scope>
    <source>
        <strain>ATCC 13032 / DSM 20300 / JCM 1318 / BCRC 11384 / CCUG 27702 / LMG 3730 / NBRC 12168 / NCIMB 10025 / NRRL B-2784 / 534</strain>
    </source>
</reference>
<reference evidence="6" key="2">
    <citation type="journal article" date="2003" name="J. Biotechnol.">
        <title>The complete Corynebacterium glutamicum ATCC 13032 genome sequence and its impact on the production of L-aspartate-derived amino acids and vitamins.</title>
        <authorList>
            <person name="Kalinowski J."/>
            <person name="Bathe B."/>
            <person name="Bartels D."/>
            <person name="Bischoff N."/>
            <person name="Bott M."/>
            <person name="Burkovski A."/>
            <person name="Dusch N."/>
            <person name="Eggeling L."/>
            <person name="Eikmanns B.J."/>
            <person name="Gaigalat L."/>
            <person name="Goesmann A."/>
            <person name="Hartmann M."/>
            <person name="Huthmacher K."/>
            <person name="Kraemer R."/>
            <person name="Linke B."/>
            <person name="McHardy A.C."/>
            <person name="Meyer F."/>
            <person name="Moeckel B."/>
            <person name="Pfefferle W."/>
            <person name="Puehler A."/>
            <person name="Rey D.A."/>
            <person name="Rueckert C."/>
            <person name="Rupp O."/>
            <person name="Sahm H."/>
            <person name="Wendisch V.F."/>
            <person name="Wiegraebe I."/>
            <person name="Tauch A."/>
        </authorList>
    </citation>
    <scope>NUCLEOTIDE SEQUENCE [LARGE SCALE GENOMIC DNA]</scope>
    <source>
        <strain>ATCC 13032 / DSM 20300 / JCM 1318 / BCRC 11384 / CCUG 27702 / LMG 3730 / NBRC 12168 / NCIMB 10025 / NRRL B-2784 / 534</strain>
    </source>
</reference>
<accession>Q8NRF6</accession>
<accession>Q6M673</accession>
<evidence type="ECO:0000250" key="1">
    <source>
        <dbReference type="UniProtKB" id="A4QD57"/>
    </source>
</evidence>
<evidence type="ECO:0000250" key="2">
    <source>
        <dbReference type="UniProtKB" id="P07288"/>
    </source>
</evidence>
<evidence type="ECO:0000250" key="3">
    <source>
        <dbReference type="UniProtKB" id="Q6H321"/>
    </source>
</evidence>
<evidence type="ECO:0000255" key="4"/>
<evidence type="ECO:0000255" key="5">
    <source>
        <dbReference type="PROSITE-ProRule" id="PRU00274"/>
    </source>
</evidence>
<evidence type="ECO:0000312" key="6">
    <source>
        <dbReference type="EMBL" id="CAF19799.1"/>
    </source>
</evidence>